<sequence>MKIGFDHEKYIEEQSKYILERVNNYDKLYLEFGGKLLYDLHAKRVLPGFDENAKIKLLHKLKEKVEIIICVYAGDIERNKIRGDFGITYDVDVLRLIDDLRSYDLQVNSVVITRYSGQPSTTVFINKLERRGIKVYKHEATKGYPADVDTIVSDEGYGKNPYIETTKPIVVVTAPGPGSGKLATCLSQLYHEYKQGKVAGYSKFETFPVWNVPLKHPLNIAYEAATVDLKDVNMIDSFHFDAYNEVAVNYNRDIESFPLLKRIIEKITGEESGYKSPTDMGVNRVGYGIIDDEVVKKASEQEIIRRYFKTGCEYKKGYLDKETLHRSKIIMHELNLKEDDRKVVMPAREYSAKLKKRYNKNEVYPVVALELEDGKVLTGRNSDVMDGTAAVILNAVKYLANISDEIHLISPVILEPIINLKLKTLGSKSTALTCEEILIALSICAVTNPTAQVAMEKLSMLRGCQAHSTTILSGNEEQTFRKLGIDITCDPEYPSESLYYNN</sequence>
<comment type="similarity">
    <text evidence="1">Belongs to the UPF0371 family.</text>
</comment>
<comment type="sequence caution" evidence="2">
    <conflict type="erroneous initiation">
        <sequence resource="EMBL-CDS" id="AAO35036"/>
    </conflict>
</comment>
<dbReference type="EMBL" id="AE015927">
    <property type="protein sequence ID" value="AAO35036.1"/>
    <property type="status" value="ALT_INIT"/>
    <property type="molecule type" value="Genomic_DNA"/>
</dbReference>
<dbReference type="RefSeq" id="WP_035111042.1">
    <property type="nucleotide sequence ID" value="NC_004557.1"/>
</dbReference>
<dbReference type="SMR" id="Q898P3"/>
<dbReference type="STRING" id="212717.CTC_00401"/>
<dbReference type="GeneID" id="24253989"/>
<dbReference type="KEGG" id="ctc:CTC_00401"/>
<dbReference type="HOGENOM" id="CLU_046981_0_0_9"/>
<dbReference type="OrthoDB" id="9803572at2"/>
<dbReference type="Proteomes" id="UP000001412">
    <property type="component" value="Chromosome"/>
</dbReference>
<dbReference type="Gene3D" id="1.20.1570.10">
    <property type="entry name" value="dip2346 domain like"/>
    <property type="match status" value="1"/>
</dbReference>
<dbReference type="Gene3D" id="3.10.630.10">
    <property type="entry name" value="dip2346 domain like"/>
    <property type="match status" value="1"/>
</dbReference>
<dbReference type="Gene3D" id="3.40.140.40">
    <property type="entry name" value="Domain of unknown function (DUF1846), C-terminal subdomain"/>
    <property type="match status" value="1"/>
</dbReference>
<dbReference type="HAMAP" id="MF_01567">
    <property type="entry name" value="UPF0371"/>
    <property type="match status" value="1"/>
</dbReference>
<dbReference type="InterPro" id="IPR014999">
    <property type="entry name" value="DUF1846"/>
</dbReference>
<dbReference type="InterPro" id="IPR048441">
    <property type="entry name" value="DUF1846_C"/>
</dbReference>
<dbReference type="InterPro" id="IPR048496">
    <property type="entry name" value="DUF1846_N"/>
</dbReference>
<dbReference type="NCBIfam" id="NF010184">
    <property type="entry name" value="PRK13663.1"/>
    <property type="match status" value="1"/>
</dbReference>
<dbReference type="Pfam" id="PF08903">
    <property type="entry name" value="DUF1846"/>
    <property type="match status" value="1"/>
</dbReference>
<dbReference type="Pfam" id="PF20921">
    <property type="entry name" value="DUF1846_C"/>
    <property type="match status" value="1"/>
</dbReference>
<dbReference type="PIRSF" id="PIRSF033132">
    <property type="entry name" value="DUF1846"/>
    <property type="match status" value="1"/>
</dbReference>
<accession>Q898P3</accession>
<feature type="chain" id="PRO_0000245615" description="UPF0371 protein CTC_00401">
    <location>
        <begin position="1"/>
        <end position="502"/>
    </location>
</feature>
<reference key="1">
    <citation type="journal article" date="2003" name="Proc. Natl. Acad. Sci. U.S.A.">
        <title>The genome sequence of Clostridium tetani, the causative agent of tetanus disease.</title>
        <authorList>
            <person name="Brueggemann H."/>
            <person name="Baeumer S."/>
            <person name="Fricke W.F."/>
            <person name="Wiezer A."/>
            <person name="Liesegang H."/>
            <person name="Decker I."/>
            <person name="Herzberg C."/>
            <person name="Martinez-Arias R."/>
            <person name="Merkl R."/>
            <person name="Henne A."/>
            <person name="Gottschalk G."/>
        </authorList>
    </citation>
    <scope>NUCLEOTIDE SEQUENCE [LARGE SCALE GENOMIC DNA]</scope>
    <source>
        <strain>Massachusetts / E88</strain>
    </source>
</reference>
<evidence type="ECO:0000255" key="1">
    <source>
        <dbReference type="HAMAP-Rule" id="MF_01567"/>
    </source>
</evidence>
<evidence type="ECO:0000305" key="2"/>
<organism>
    <name type="scientific">Clostridium tetani (strain Massachusetts / E88)</name>
    <dbReference type="NCBI Taxonomy" id="212717"/>
    <lineage>
        <taxon>Bacteria</taxon>
        <taxon>Bacillati</taxon>
        <taxon>Bacillota</taxon>
        <taxon>Clostridia</taxon>
        <taxon>Eubacteriales</taxon>
        <taxon>Clostridiaceae</taxon>
        <taxon>Clostridium</taxon>
    </lineage>
</organism>
<proteinExistence type="inferred from homology"/>
<name>Y401_CLOTE</name>
<gene>
    <name type="ordered locus">CTC_00401</name>
</gene>
<keyword id="KW-1185">Reference proteome</keyword>
<protein>
    <recommendedName>
        <fullName evidence="1">UPF0371 protein CTC_00401</fullName>
    </recommendedName>
</protein>